<sequence>MYGSARTITNLEGSPSRSPRLPRSPRLGHRRTSSGGGGGTGKTLSMENIQSLNAAYATSGPMYLSDHEGVASTTYPKGTMTLGRATNRAVYGGRVTAMGSSPNIASAGLSHTDVLSYTDQHGGLTGSSHHHHHQVPSMLRQVRDSTMLDLQAQLKELQRENDLLRKELDIKDSKLGSSMNSIKTFWSPELKKERVLRKEEAARMSVLKEQMRVSHEENQHLQLTIQALQDELRTQRDLNHLLQQESGNRGAEHFTIELTEENFRRLQAEHDRQAKELFLLRKTLEEMELRIETQKQTLNARDESIKKLLEMLQSKGLPSKSLEDDNERTRRMAEAESQVSHLEVILDQKEKENIHLREELHRRSQLQPEPAKTKALQTVIEMKDTKIASLERNIRDLEDEIQMLKANGVLNTEDREEEIKQIEVYKSHSKFMKTKIDQLKQELSKKESELLALQTKLETLSNQNSDCKQHIEVLKESLTAKEQRAAILQTEVDALRLRLEEKESFLNKKTKQLQDLTEEKGTLAGEIRDMKDMLEVKERKINVLQKKIENLQEQLRDKDKQLTNLKDRVKSLQTDSSNTDTALATLEEALSEKERIIERLKEQRERDDRERLEEIESFRKENKDLKEKVNALQAELTEKESSLIDLKEHASSLASAGLKRDSKLKSLEIAIEQKKEECSKLEAQLKKAHNIEDDSRMNPEFADQIKQLDKEASYYRDECGKAQAEVDRLLEILKEVENEKNDKDKKIAELESLTLRHMKDQNKKVANLKHNQQLEKKKNAQLLEEVRRREDSMADNSQHLQIEELMNALEKTRQELDATKARLASTQQSLAEKEAHLANLRIERRKQLEEILEMKQEALLAAISEKDANIALLELSASKKKKTQEEVMALKREKDRLVHQLKQQTQNRMKLMADNYDDDHHHYHHHHHHHHHRSPGRSQHSNHRPSPDQDDEEGIWA</sequence>
<organism>
    <name type="scientific">Homo sapiens</name>
    <name type="common">Human</name>
    <dbReference type="NCBI Taxonomy" id="9606"/>
    <lineage>
        <taxon>Eukaryota</taxon>
        <taxon>Metazoa</taxon>
        <taxon>Chordata</taxon>
        <taxon>Craniata</taxon>
        <taxon>Vertebrata</taxon>
        <taxon>Euteleostomi</taxon>
        <taxon>Mammalia</taxon>
        <taxon>Eutheria</taxon>
        <taxon>Euarchontoglires</taxon>
        <taxon>Primates</taxon>
        <taxon>Haplorrhini</taxon>
        <taxon>Catarrhini</taxon>
        <taxon>Hominidae</taxon>
        <taxon>Homo</taxon>
    </lineage>
</organism>
<dbReference type="EMBL" id="AB002376">
    <property type="protein sequence ID" value="BAA20832.2"/>
    <property type="status" value="ALT_INIT"/>
    <property type="molecule type" value="mRNA"/>
</dbReference>
<dbReference type="EMBL" id="BC046212">
    <property type="status" value="NOT_ANNOTATED_CDS"/>
    <property type="molecule type" value="mRNA"/>
</dbReference>
<dbReference type="EMBL" id="BC111550">
    <property type="protein sequence ID" value="AAI11551.1"/>
    <property type="molecule type" value="mRNA"/>
</dbReference>
<dbReference type="EMBL" id="BC112391">
    <property type="protein sequence ID" value="AAI12392.1"/>
    <property type="molecule type" value="mRNA"/>
</dbReference>
<dbReference type="CCDS" id="CCDS46851.1"/>
<dbReference type="RefSeq" id="NP_056391.1">
    <property type="nucleotide sequence ID" value="NM_015576.3"/>
</dbReference>
<dbReference type="RefSeq" id="XP_016861647.1">
    <property type="nucleotide sequence ID" value="XM_017006158.1"/>
</dbReference>
<dbReference type="SMR" id="O15083"/>
<dbReference type="BioGRID" id="117521">
    <property type="interactions" value="36"/>
</dbReference>
<dbReference type="FunCoup" id="O15083">
    <property type="interactions" value="230"/>
</dbReference>
<dbReference type="IntAct" id="O15083">
    <property type="interactions" value="12"/>
</dbReference>
<dbReference type="MINT" id="O15083"/>
<dbReference type="STRING" id="9606.ENSP00000288221"/>
<dbReference type="GlyCosmos" id="O15083">
    <property type="glycosylation" value="1 site, 1 glycan"/>
</dbReference>
<dbReference type="GlyGen" id="O15083">
    <property type="glycosylation" value="2 sites, 1 O-linked glycan (2 sites)"/>
</dbReference>
<dbReference type="iPTMnet" id="O15083"/>
<dbReference type="MetOSite" id="O15083"/>
<dbReference type="PhosphoSitePlus" id="O15083"/>
<dbReference type="BioMuta" id="ERC2"/>
<dbReference type="jPOST" id="O15083"/>
<dbReference type="MassIVE" id="O15083"/>
<dbReference type="PaxDb" id="9606-ENSP00000288221"/>
<dbReference type="PeptideAtlas" id="O15083"/>
<dbReference type="ProteomicsDB" id="48436"/>
<dbReference type="Pumba" id="O15083"/>
<dbReference type="Antibodypedia" id="46273">
    <property type="antibodies" value="59 antibodies from 21 providers"/>
</dbReference>
<dbReference type="DNASU" id="26059"/>
<dbReference type="Ensembl" id="ENST00000288221.11">
    <property type="protein sequence ID" value="ENSP00000288221.6"/>
    <property type="gene ID" value="ENSG00000187672.15"/>
</dbReference>
<dbReference type="Ensembl" id="ENST00000460849.5">
    <property type="protein sequence ID" value="ENSP00000417445.1"/>
    <property type="gene ID" value="ENSG00000187672.15"/>
</dbReference>
<dbReference type="GeneID" id="26059"/>
<dbReference type="KEGG" id="hsa:26059"/>
<dbReference type="MANE-Select" id="ENST00000288221.11">
    <property type="protein sequence ID" value="ENSP00000288221.6"/>
    <property type="RefSeq nucleotide sequence ID" value="NM_015576.3"/>
    <property type="RefSeq protein sequence ID" value="NP_056391.1"/>
</dbReference>
<dbReference type="UCSC" id="uc062kue.1">
    <property type="organism name" value="human"/>
</dbReference>
<dbReference type="AGR" id="HGNC:31922"/>
<dbReference type="CTD" id="26059"/>
<dbReference type="DisGeNET" id="26059"/>
<dbReference type="GeneCards" id="ERC2"/>
<dbReference type="HGNC" id="HGNC:31922">
    <property type="gene designation" value="ERC2"/>
</dbReference>
<dbReference type="HPA" id="ENSG00000187672">
    <property type="expression patterns" value="Tissue enriched (brain)"/>
</dbReference>
<dbReference type="neXtProt" id="NX_O15083"/>
<dbReference type="OpenTargets" id="ENSG00000187672"/>
<dbReference type="PharmGKB" id="PA162385249"/>
<dbReference type="VEuPathDB" id="HostDB:ENSG00000187672"/>
<dbReference type="eggNOG" id="KOG4809">
    <property type="taxonomic scope" value="Eukaryota"/>
</dbReference>
<dbReference type="GeneTree" id="ENSGT00650000093320"/>
<dbReference type="HOGENOM" id="CLU_009304_0_0_1"/>
<dbReference type="InParanoid" id="O15083"/>
<dbReference type="OMA" id="EEILEMX"/>
<dbReference type="OrthoDB" id="2019763at2759"/>
<dbReference type="PAN-GO" id="O15083">
    <property type="GO annotations" value="5 GO annotations based on evolutionary models"/>
</dbReference>
<dbReference type="PhylomeDB" id="O15083"/>
<dbReference type="TreeFam" id="TF324969"/>
<dbReference type="PathwayCommons" id="O15083"/>
<dbReference type="SignaLink" id="O15083"/>
<dbReference type="BioGRID-ORCS" id="26059">
    <property type="hits" value="15 hits in 1144 CRISPR screens"/>
</dbReference>
<dbReference type="CD-CODE" id="FB4E32DD">
    <property type="entry name" value="Presynaptic clusters and postsynaptic densities"/>
</dbReference>
<dbReference type="ChiTaRS" id="ERC2">
    <property type="organism name" value="human"/>
</dbReference>
<dbReference type="GeneWiki" id="ERC2_(gene)"/>
<dbReference type="GenomeRNAi" id="26059"/>
<dbReference type="Pharos" id="O15083">
    <property type="development level" value="Tbio"/>
</dbReference>
<dbReference type="PRO" id="PR:O15083"/>
<dbReference type="Proteomes" id="UP000005640">
    <property type="component" value="Chromosome 3"/>
</dbReference>
<dbReference type="RNAct" id="O15083">
    <property type="molecule type" value="protein"/>
</dbReference>
<dbReference type="Bgee" id="ENSG00000187672">
    <property type="expression patterns" value="Expressed in middle temporal gyrus and 128 other cell types or tissues"/>
</dbReference>
<dbReference type="ExpressionAtlas" id="O15083">
    <property type="expression patterns" value="baseline and differential"/>
</dbReference>
<dbReference type="GO" id="GO:0005856">
    <property type="term" value="C:cytoskeleton"/>
    <property type="evidence" value="ECO:0007669"/>
    <property type="project" value="UniProtKB-SubCell"/>
</dbReference>
<dbReference type="GO" id="GO:0098982">
    <property type="term" value="C:GABA-ergic synapse"/>
    <property type="evidence" value="ECO:0007669"/>
    <property type="project" value="Ensembl"/>
</dbReference>
<dbReference type="GO" id="GO:0098978">
    <property type="term" value="C:glutamatergic synapse"/>
    <property type="evidence" value="ECO:0007669"/>
    <property type="project" value="Ensembl"/>
</dbReference>
<dbReference type="GO" id="GO:0030426">
    <property type="term" value="C:growth cone"/>
    <property type="evidence" value="ECO:0000250"/>
    <property type="project" value="UniProtKB"/>
</dbReference>
<dbReference type="GO" id="GO:0048786">
    <property type="term" value="C:presynaptic active zone"/>
    <property type="evidence" value="ECO:0000304"/>
    <property type="project" value="ParkinsonsUK-UCL"/>
</dbReference>
<dbReference type="GO" id="GO:0098831">
    <property type="term" value="C:presynaptic active zone cytoplasmic component"/>
    <property type="evidence" value="ECO:0000318"/>
    <property type="project" value="GO_Central"/>
</dbReference>
<dbReference type="GO" id="GO:0042734">
    <property type="term" value="C:presynaptic membrane"/>
    <property type="evidence" value="ECO:0000250"/>
    <property type="project" value="UniProtKB"/>
</dbReference>
<dbReference type="GO" id="GO:0098882">
    <property type="term" value="F:structural constituent of presynaptic active zone"/>
    <property type="evidence" value="ECO:0000318"/>
    <property type="project" value="GO_Central"/>
</dbReference>
<dbReference type="GO" id="GO:0048790">
    <property type="term" value="P:maintenance of presynaptic active zone structure"/>
    <property type="evidence" value="ECO:0000318"/>
    <property type="project" value="GO_Central"/>
</dbReference>
<dbReference type="GO" id="GO:0150037">
    <property type="term" value="P:regulation of calcium-dependent activation of synaptic vesicle fusion"/>
    <property type="evidence" value="ECO:0007669"/>
    <property type="project" value="Ensembl"/>
</dbReference>
<dbReference type="GO" id="GO:0099509">
    <property type="term" value="P:regulation of presynaptic cytosolic calcium ion concentration"/>
    <property type="evidence" value="ECO:0007669"/>
    <property type="project" value="Ensembl"/>
</dbReference>
<dbReference type="GO" id="GO:0016082">
    <property type="term" value="P:synaptic vesicle priming"/>
    <property type="evidence" value="ECO:0007669"/>
    <property type="project" value="Ensembl"/>
</dbReference>
<dbReference type="Gene3D" id="1.10.287.1490">
    <property type="match status" value="1"/>
</dbReference>
<dbReference type="InterPro" id="IPR019323">
    <property type="entry name" value="ELKS/CAST"/>
</dbReference>
<dbReference type="PANTHER" id="PTHR18861">
    <property type="entry name" value="ELKS/RAB6-INTERACTING/CAST PROTEIN"/>
    <property type="match status" value="1"/>
</dbReference>
<dbReference type="PANTHER" id="PTHR18861:SF3">
    <property type="entry name" value="ERC PROTEIN 2"/>
    <property type="match status" value="1"/>
</dbReference>
<dbReference type="Pfam" id="PF10174">
    <property type="entry name" value="Cast"/>
    <property type="match status" value="1"/>
</dbReference>
<dbReference type="SUPFAM" id="SSF57997">
    <property type="entry name" value="Tropomyosin"/>
    <property type="match status" value="1"/>
</dbReference>
<feature type="chain" id="PRO_0000087002" description="ERC protein 2">
    <location>
        <begin position="1"/>
        <end position="957"/>
    </location>
</feature>
<feature type="region of interest" description="Disordered" evidence="4">
    <location>
        <begin position="1"/>
        <end position="44"/>
    </location>
</feature>
<feature type="region of interest" description="Disordered" evidence="4">
    <location>
        <begin position="918"/>
        <end position="957"/>
    </location>
</feature>
<feature type="coiled-coil region" evidence="3">
    <location>
        <begin position="140"/>
        <end position="917"/>
    </location>
</feature>
<feature type="compositionally biased region" description="Polar residues" evidence="4">
    <location>
        <begin position="1"/>
        <end position="13"/>
    </location>
</feature>
<feature type="compositionally biased region" description="Low complexity" evidence="4">
    <location>
        <begin position="14"/>
        <end position="25"/>
    </location>
</feature>
<feature type="compositionally biased region" description="Basic residues" evidence="4">
    <location>
        <begin position="922"/>
        <end position="943"/>
    </location>
</feature>
<feature type="compositionally biased region" description="Acidic residues" evidence="4">
    <location>
        <begin position="948"/>
        <end position="957"/>
    </location>
</feature>
<feature type="modified residue" description="Phosphoserine" evidence="2">
    <location>
        <position position="65"/>
    </location>
</feature>
<feature type="modified residue" description="Phosphoserine" evidence="2">
    <location>
        <position position="666"/>
    </location>
</feature>
<feature type="sequence variant" id="VAR_050973" description="In dbSNP:rs12488237.">
    <original>N</original>
    <variation>S</variation>
    <location>
        <position position="542"/>
    </location>
</feature>
<proteinExistence type="evidence at protein level"/>
<accession>O15083</accession>
<accession>Q2T9F6</accession>
<accession>Q86TK4</accession>
<reference key="1">
    <citation type="journal article" date="1997" name="DNA Res.">
        <title>Prediction of the coding sequences of unidentified human genes. VII. The complete sequences of 100 new cDNA clones from brain which can code for large proteins in vitro.</title>
        <authorList>
            <person name="Nagase T."/>
            <person name="Ishikawa K."/>
            <person name="Nakajima D."/>
            <person name="Ohira M."/>
            <person name="Seki N."/>
            <person name="Miyajima N."/>
            <person name="Tanaka A."/>
            <person name="Kotani H."/>
            <person name="Nomura N."/>
            <person name="Ohara O."/>
        </authorList>
    </citation>
    <scope>NUCLEOTIDE SEQUENCE [LARGE SCALE MRNA]</scope>
    <source>
        <tissue>Brain</tissue>
    </source>
</reference>
<reference key="2">
    <citation type="journal article" date="2002" name="DNA Res.">
        <title>Construction of expression-ready cDNA clones for KIAA genes: manual curation of 330 KIAA cDNA clones.</title>
        <authorList>
            <person name="Nakajima D."/>
            <person name="Okazaki N."/>
            <person name="Yamakawa H."/>
            <person name="Kikuno R."/>
            <person name="Ohara O."/>
            <person name="Nagase T."/>
        </authorList>
    </citation>
    <scope>SEQUENCE REVISION</scope>
</reference>
<reference key="3">
    <citation type="journal article" date="2004" name="Genome Res.">
        <title>The status, quality, and expansion of the NIH full-length cDNA project: the Mammalian Gene Collection (MGC).</title>
        <authorList>
            <consortium name="The MGC Project Team"/>
        </authorList>
    </citation>
    <scope>NUCLEOTIDE SEQUENCE [LARGE SCALE MRNA]</scope>
    <source>
        <tissue>PNS</tissue>
    </source>
</reference>
<reference key="4">
    <citation type="journal article" date="2003" name="J. Biol. Chem.">
        <title>Interaction of the ERC family of RIM-binding proteins with the liprin-alpha family of multidomain proteins.</title>
        <authorList>
            <person name="Ko J."/>
            <person name="Na M."/>
            <person name="Kim S."/>
            <person name="Lee J.R."/>
            <person name="Kim E."/>
        </authorList>
    </citation>
    <scope>SUBCELLULAR LOCATION</scope>
    <scope>INTERACTION WITH PPFIA1; PPFIA2; PPFIA3 AND PPFIA4</scope>
</reference>
<evidence type="ECO:0000250" key="1"/>
<evidence type="ECO:0000250" key="2">
    <source>
        <dbReference type="UniProtKB" id="Q6PH08"/>
    </source>
</evidence>
<evidence type="ECO:0000255" key="3"/>
<evidence type="ECO:0000256" key="4">
    <source>
        <dbReference type="SAM" id="MobiDB-lite"/>
    </source>
</evidence>
<evidence type="ECO:0000269" key="5">
    <source>
    </source>
</evidence>
<evidence type="ECO:0000305" key="6"/>
<comment type="function">
    <text>Thought to be involved in the organization of the cytomatrix at the nerve terminals active zone (CAZ) which regulates neurotransmitter release. Seems to act together with BSN. May recruit liprin-alpha proteins to the CAZ.</text>
</comment>
<comment type="subunit">
    <text evidence="5">Interacts with BSN, ERC1, PPFIA1, PPFIA2, PPFIA3 and PPFIA4. Interacts through its C-terminus with the PDZ domain of RIMS1. Part of a complex consisting of ERC2, RIMS1 and UNC13A.</text>
</comment>
<comment type="interaction">
    <interactant intactId="EBI-2684336">
        <id>O15083</id>
    </interactant>
    <interactant intactId="EBI-298355">
        <id>P10242</id>
        <label>MYB</label>
    </interactant>
    <organismsDiffer>false</organismsDiffer>
    <experiments>2</experiments>
</comment>
<comment type="subcellular location">
    <subcellularLocation>
        <location evidence="5">Cytoplasm</location>
    </subcellularLocation>
    <subcellularLocation>
        <location evidence="5">Synapse</location>
    </subcellularLocation>
    <subcellularLocation>
        <location evidence="5">Presynaptic active zone</location>
    </subcellularLocation>
    <subcellularLocation>
        <location evidence="5">Cytoplasm</location>
        <location evidence="5">Cytoskeleton</location>
    </subcellularLocation>
    <text evidence="1">In neurons, localized to synapses, and colocalizes with PCLO. Localized to the active zone of presynaptic density (By similarity).</text>
</comment>
<comment type="sequence caution" evidence="6">
    <conflict type="erroneous initiation">
        <sequence resource="EMBL-CDS" id="BAA20832"/>
    </conflict>
    <text>Truncated N-terminus.</text>
</comment>
<name>ERC2_HUMAN</name>
<keyword id="KW-0966">Cell projection</keyword>
<keyword id="KW-0175">Coiled coil</keyword>
<keyword id="KW-0963">Cytoplasm</keyword>
<keyword id="KW-0206">Cytoskeleton</keyword>
<keyword id="KW-0597">Phosphoprotein</keyword>
<keyword id="KW-1267">Proteomics identification</keyword>
<keyword id="KW-1185">Reference proteome</keyword>
<keyword id="KW-0770">Synapse</keyword>
<gene>
    <name type="primary">ERC2</name>
    <name type="synonym">KIAA0378</name>
</gene>
<protein>
    <recommendedName>
        <fullName>ERC protein 2</fullName>
    </recommendedName>
</protein>